<evidence type="ECO:0000255" key="1">
    <source>
        <dbReference type="HAMAP-Rule" id="MF_00930"/>
    </source>
</evidence>
<accession>P43882</accession>
<sequence>MAKSNYITRQGWLALDQELKFLWKEERPKVTQAVSDAAALGDRSENAEYIYGKRRLREIDRRVRFLTKRLEVLQIVDYNPKQEGKVFFGAWVELENEEGETKQYRIVGCDEFAPAKNWISIDSPVARALIGKTLDDEVRVETPSGFITLYVNKIWYEK</sequence>
<name>GREB_HAEIN</name>
<comment type="function">
    <text evidence="1">Necessary for efficient RNA polymerase transcription elongation past template-encoded arresting sites. The arresting sites in DNA have the property of trapping a certain fraction of elongating RNA polymerases that pass through, resulting in locked ternary complexes. Cleavage of the nascent transcript by cleavage factors such as GreA or GreB allows the resumption of elongation from the new 3'terminus. GreB releases sequences of up to 9 nucleotides in length.</text>
</comment>
<comment type="similarity">
    <text evidence="1">Belongs to the GreA/GreB family. GreB subfamily.</text>
</comment>
<organism>
    <name type="scientific">Haemophilus influenzae (strain ATCC 51907 / DSM 11121 / KW20 / Rd)</name>
    <dbReference type="NCBI Taxonomy" id="71421"/>
    <lineage>
        <taxon>Bacteria</taxon>
        <taxon>Pseudomonadati</taxon>
        <taxon>Pseudomonadota</taxon>
        <taxon>Gammaproteobacteria</taxon>
        <taxon>Pasteurellales</taxon>
        <taxon>Pasteurellaceae</taxon>
        <taxon>Haemophilus</taxon>
    </lineage>
</organism>
<protein>
    <recommendedName>
        <fullName evidence="1">Transcription elongation factor GreB</fullName>
    </recommendedName>
    <alternativeName>
        <fullName evidence="1">Transcript cleavage factor GreB</fullName>
    </alternativeName>
</protein>
<feature type="chain" id="PRO_0000176930" description="Transcription elongation factor GreB">
    <location>
        <begin position="1"/>
        <end position="158"/>
    </location>
</feature>
<feature type="coiled-coil region" evidence="1">
    <location>
        <begin position="53"/>
        <end position="75"/>
    </location>
</feature>
<reference key="1">
    <citation type="journal article" date="1995" name="Science">
        <title>Whole-genome random sequencing and assembly of Haemophilus influenzae Rd.</title>
        <authorList>
            <person name="Fleischmann R.D."/>
            <person name="Adams M.D."/>
            <person name="White O."/>
            <person name="Clayton R.A."/>
            <person name="Kirkness E.F."/>
            <person name="Kerlavage A.R."/>
            <person name="Bult C.J."/>
            <person name="Tomb J.-F."/>
            <person name="Dougherty B.A."/>
            <person name="Merrick J.M."/>
            <person name="McKenney K."/>
            <person name="Sutton G.G."/>
            <person name="FitzHugh W."/>
            <person name="Fields C.A."/>
            <person name="Gocayne J.D."/>
            <person name="Scott J.D."/>
            <person name="Shirley R."/>
            <person name="Liu L.-I."/>
            <person name="Glodek A."/>
            <person name="Kelley J.M."/>
            <person name="Weidman J.F."/>
            <person name="Phillips C.A."/>
            <person name="Spriggs T."/>
            <person name="Hedblom E."/>
            <person name="Cotton M.D."/>
            <person name="Utterback T.R."/>
            <person name="Hanna M.C."/>
            <person name="Nguyen D.T."/>
            <person name="Saudek D.M."/>
            <person name="Brandon R.C."/>
            <person name="Fine L.D."/>
            <person name="Fritchman J.L."/>
            <person name="Fuhrmann J.L."/>
            <person name="Geoghagen N.S.M."/>
            <person name="Gnehm C.L."/>
            <person name="McDonald L.A."/>
            <person name="Small K.V."/>
            <person name="Fraser C.M."/>
            <person name="Smith H.O."/>
            <person name="Venter J.C."/>
        </authorList>
    </citation>
    <scope>NUCLEOTIDE SEQUENCE [LARGE SCALE GENOMIC DNA]</scope>
    <source>
        <strain>ATCC 51907 / DSM 11121 / KW20 / Rd</strain>
    </source>
</reference>
<dbReference type="EMBL" id="L42023">
    <property type="protein sequence ID" value="AAC22227.1"/>
    <property type="molecule type" value="Genomic_DNA"/>
</dbReference>
<dbReference type="PIR" id="B64078">
    <property type="entry name" value="B64078"/>
</dbReference>
<dbReference type="RefSeq" id="NP_438726.1">
    <property type="nucleotide sequence ID" value="NC_000907.1"/>
</dbReference>
<dbReference type="SMR" id="P43882"/>
<dbReference type="STRING" id="71421.HI_0569"/>
<dbReference type="EnsemblBacteria" id="AAC22227">
    <property type="protein sequence ID" value="AAC22227"/>
    <property type="gene ID" value="HI_0569"/>
</dbReference>
<dbReference type="KEGG" id="hin:HI_0569"/>
<dbReference type="PATRIC" id="fig|71421.8.peg.589"/>
<dbReference type="eggNOG" id="COG0782">
    <property type="taxonomic scope" value="Bacteria"/>
</dbReference>
<dbReference type="HOGENOM" id="CLU_101379_3_0_6"/>
<dbReference type="OrthoDB" id="5511940at2"/>
<dbReference type="PhylomeDB" id="P43882"/>
<dbReference type="BioCyc" id="HINF71421:G1GJ1-581-MONOMER"/>
<dbReference type="Proteomes" id="UP000000579">
    <property type="component" value="Chromosome"/>
</dbReference>
<dbReference type="GO" id="GO:0003677">
    <property type="term" value="F:DNA binding"/>
    <property type="evidence" value="ECO:0007669"/>
    <property type="project" value="UniProtKB-UniRule"/>
</dbReference>
<dbReference type="GO" id="GO:0070063">
    <property type="term" value="F:RNA polymerase binding"/>
    <property type="evidence" value="ECO:0007669"/>
    <property type="project" value="InterPro"/>
</dbReference>
<dbReference type="GO" id="GO:0006354">
    <property type="term" value="P:DNA-templated transcription elongation"/>
    <property type="evidence" value="ECO:0000318"/>
    <property type="project" value="GO_Central"/>
</dbReference>
<dbReference type="GO" id="GO:0032784">
    <property type="term" value="P:regulation of DNA-templated transcription elongation"/>
    <property type="evidence" value="ECO:0007669"/>
    <property type="project" value="UniProtKB-UniRule"/>
</dbReference>
<dbReference type="FunFam" id="1.10.287.180:FF:000001">
    <property type="entry name" value="Transcription elongation factor GreA"/>
    <property type="match status" value="1"/>
</dbReference>
<dbReference type="FunFam" id="3.10.50.30:FF:000001">
    <property type="entry name" value="Transcription elongation factor GreA"/>
    <property type="match status" value="1"/>
</dbReference>
<dbReference type="Gene3D" id="3.10.50.30">
    <property type="entry name" value="Transcription elongation factor, GreA/GreB, C-terminal domain"/>
    <property type="match status" value="1"/>
</dbReference>
<dbReference type="Gene3D" id="1.10.287.180">
    <property type="entry name" value="Transcription elongation factor, GreA/GreB, N-terminal domain"/>
    <property type="match status" value="1"/>
</dbReference>
<dbReference type="HAMAP" id="MF_00105">
    <property type="entry name" value="GreA_GreB"/>
    <property type="match status" value="1"/>
</dbReference>
<dbReference type="HAMAP" id="MF_00930">
    <property type="entry name" value="GreB"/>
    <property type="match status" value="1"/>
</dbReference>
<dbReference type="InterPro" id="IPR036953">
    <property type="entry name" value="GreA/GreB_C_sf"/>
</dbReference>
<dbReference type="InterPro" id="IPR018151">
    <property type="entry name" value="TF_GreA/GreB_CS"/>
</dbReference>
<dbReference type="InterPro" id="IPR028624">
    <property type="entry name" value="Tscrpt_elong_fac_GreA/B"/>
</dbReference>
<dbReference type="InterPro" id="IPR001437">
    <property type="entry name" value="Tscrpt_elong_fac_GreA/B_C"/>
</dbReference>
<dbReference type="InterPro" id="IPR023459">
    <property type="entry name" value="Tscrpt_elong_fac_GreA/B_fam"/>
</dbReference>
<dbReference type="InterPro" id="IPR022691">
    <property type="entry name" value="Tscrpt_elong_fac_GreA/B_N"/>
</dbReference>
<dbReference type="InterPro" id="IPR036805">
    <property type="entry name" value="Tscrpt_elong_fac_GreA/B_N_sf"/>
</dbReference>
<dbReference type="InterPro" id="IPR006358">
    <property type="entry name" value="Tscrpt_elong_fac_GreB"/>
</dbReference>
<dbReference type="NCBIfam" id="TIGR01461">
    <property type="entry name" value="greB"/>
    <property type="match status" value="1"/>
</dbReference>
<dbReference type="NCBIfam" id="NF002506">
    <property type="entry name" value="PRK01885.1"/>
    <property type="match status" value="1"/>
</dbReference>
<dbReference type="PANTHER" id="PTHR30437">
    <property type="entry name" value="TRANSCRIPTION ELONGATION FACTOR GREA"/>
    <property type="match status" value="1"/>
</dbReference>
<dbReference type="PANTHER" id="PTHR30437:SF6">
    <property type="entry name" value="TRANSCRIPTION ELONGATION FACTOR GREB"/>
    <property type="match status" value="1"/>
</dbReference>
<dbReference type="Pfam" id="PF01272">
    <property type="entry name" value="GreA_GreB"/>
    <property type="match status" value="1"/>
</dbReference>
<dbReference type="Pfam" id="PF03449">
    <property type="entry name" value="GreA_GreB_N"/>
    <property type="match status" value="1"/>
</dbReference>
<dbReference type="PIRSF" id="PIRSF006092">
    <property type="entry name" value="GreA_GreB"/>
    <property type="match status" value="1"/>
</dbReference>
<dbReference type="SUPFAM" id="SSF54534">
    <property type="entry name" value="FKBP-like"/>
    <property type="match status" value="1"/>
</dbReference>
<dbReference type="SUPFAM" id="SSF46557">
    <property type="entry name" value="GreA transcript cleavage protein, N-terminal domain"/>
    <property type="match status" value="1"/>
</dbReference>
<dbReference type="PROSITE" id="PS00829">
    <property type="entry name" value="GREAB_1"/>
    <property type="match status" value="1"/>
</dbReference>
<dbReference type="PROSITE" id="PS00830">
    <property type="entry name" value="GREAB_2"/>
    <property type="match status" value="1"/>
</dbReference>
<keyword id="KW-0175">Coiled coil</keyword>
<keyword id="KW-0238">DNA-binding</keyword>
<keyword id="KW-1185">Reference proteome</keyword>
<keyword id="KW-0804">Transcription</keyword>
<keyword id="KW-0805">Transcription regulation</keyword>
<proteinExistence type="inferred from homology"/>
<gene>
    <name evidence="1" type="primary">greB</name>
    <name type="ordered locus">HI_0569</name>
</gene>